<sequence>MIQQESRLRVADNSGAKELLCIRVLGGSKRRYGNIGDVIVATVKSATPGGVVKKGKVVKAVIVRSKQGVRRNDGSYISFDENAAVIIKDDKTPVGTRIFGPVARELRDNEFMKIVSLAPEVL</sequence>
<proteinExistence type="inferred from homology"/>
<evidence type="ECO:0000255" key="1">
    <source>
        <dbReference type="HAMAP-Rule" id="MF_01367"/>
    </source>
</evidence>
<evidence type="ECO:0000305" key="2"/>
<organism>
    <name type="scientific">Clostridioides difficile (strain 630)</name>
    <name type="common">Peptoclostridium difficile</name>
    <dbReference type="NCBI Taxonomy" id="272563"/>
    <lineage>
        <taxon>Bacteria</taxon>
        <taxon>Bacillati</taxon>
        <taxon>Bacillota</taxon>
        <taxon>Clostridia</taxon>
        <taxon>Peptostreptococcales</taxon>
        <taxon>Peptostreptococcaceae</taxon>
        <taxon>Clostridioides</taxon>
    </lineage>
</organism>
<protein>
    <recommendedName>
        <fullName evidence="1">Large ribosomal subunit protein uL14</fullName>
    </recommendedName>
    <alternativeName>
        <fullName evidence="2">50S ribosomal protein L14</fullName>
    </alternativeName>
</protein>
<reference key="1">
    <citation type="journal article" date="2006" name="Nat. Genet.">
        <title>The multidrug-resistant human pathogen Clostridium difficile has a highly mobile, mosaic genome.</title>
        <authorList>
            <person name="Sebaihia M."/>
            <person name="Wren B.W."/>
            <person name="Mullany P."/>
            <person name="Fairweather N.F."/>
            <person name="Minton N."/>
            <person name="Stabler R."/>
            <person name="Thomson N.R."/>
            <person name="Roberts A.P."/>
            <person name="Cerdeno-Tarraga A.M."/>
            <person name="Wang H."/>
            <person name="Holden M.T.G."/>
            <person name="Wright A."/>
            <person name="Churcher C."/>
            <person name="Quail M.A."/>
            <person name="Baker S."/>
            <person name="Bason N."/>
            <person name="Brooks K."/>
            <person name="Chillingworth T."/>
            <person name="Cronin A."/>
            <person name="Davis P."/>
            <person name="Dowd L."/>
            <person name="Fraser A."/>
            <person name="Feltwell T."/>
            <person name="Hance Z."/>
            <person name="Holroyd S."/>
            <person name="Jagels K."/>
            <person name="Moule S."/>
            <person name="Mungall K."/>
            <person name="Price C."/>
            <person name="Rabbinowitsch E."/>
            <person name="Sharp S."/>
            <person name="Simmonds M."/>
            <person name="Stevens K."/>
            <person name="Unwin L."/>
            <person name="Whithead S."/>
            <person name="Dupuy B."/>
            <person name="Dougan G."/>
            <person name="Barrell B."/>
            <person name="Parkhill J."/>
        </authorList>
    </citation>
    <scope>NUCLEOTIDE SEQUENCE [LARGE SCALE GENOMIC DNA]</scope>
    <source>
        <strain>630</strain>
    </source>
</reference>
<accession>Q18CG7</accession>
<dbReference type="EMBL" id="AM180355">
    <property type="protein sequence ID" value="CAJ66898.1"/>
    <property type="molecule type" value="Genomic_DNA"/>
</dbReference>
<dbReference type="RefSeq" id="WP_003421155.1">
    <property type="nucleotide sequence ID" value="NZ_JAUPES010000043.1"/>
</dbReference>
<dbReference type="RefSeq" id="YP_001086547.1">
    <property type="nucleotide sequence ID" value="NC_009089.1"/>
</dbReference>
<dbReference type="SMR" id="Q18CG7"/>
<dbReference type="STRING" id="272563.CD630_00820"/>
<dbReference type="EnsemblBacteria" id="CAJ66898">
    <property type="protein sequence ID" value="CAJ66898"/>
    <property type="gene ID" value="CD630_00820"/>
</dbReference>
<dbReference type="GeneID" id="66352581"/>
<dbReference type="KEGG" id="cdf:CD630_00820"/>
<dbReference type="KEGG" id="pdc:CDIF630_00149"/>
<dbReference type="PATRIC" id="fig|272563.120.peg.89"/>
<dbReference type="eggNOG" id="COG0093">
    <property type="taxonomic scope" value="Bacteria"/>
</dbReference>
<dbReference type="OrthoDB" id="9806379at2"/>
<dbReference type="PhylomeDB" id="Q18CG7"/>
<dbReference type="BioCyc" id="PDIF272563:G12WB-137-MONOMER"/>
<dbReference type="Proteomes" id="UP000001978">
    <property type="component" value="Chromosome"/>
</dbReference>
<dbReference type="GO" id="GO:0022625">
    <property type="term" value="C:cytosolic large ribosomal subunit"/>
    <property type="evidence" value="ECO:0007669"/>
    <property type="project" value="TreeGrafter"/>
</dbReference>
<dbReference type="GO" id="GO:0070180">
    <property type="term" value="F:large ribosomal subunit rRNA binding"/>
    <property type="evidence" value="ECO:0007669"/>
    <property type="project" value="TreeGrafter"/>
</dbReference>
<dbReference type="GO" id="GO:0003735">
    <property type="term" value="F:structural constituent of ribosome"/>
    <property type="evidence" value="ECO:0007669"/>
    <property type="project" value="InterPro"/>
</dbReference>
<dbReference type="GO" id="GO:0006412">
    <property type="term" value="P:translation"/>
    <property type="evidence" value="ECO:0007669"/>
    <property type="project" value="UniProtKB-UniRule"/>
</dbReference>
<dbReference type="CDD" id="cd00337">
    <property type="entry name" value="Ribosomal_uL14"/>
    <property type="match status" value="1"/>
</dbReference>
<dbReference type="FunFam" id="2.40.150.20:FF:000001">
    <property type="entry name" value="50S ribosomal protein L14"/>
    <property type="match status" value="1"/>
</dbReference>
<dbReference type="Gene3D" id="2.40.150.20">
    <property type="entry name" value="Ribosomal protein L14"/>
    <property type="match status" value="1"/>
</dbReference>
<dbReference type="HAMAP" id="MF_01367">
    <property type="entry name" value="Ribosomal_uL14"/>
    <property type="match status" value="1"/>
</dbReference>
<dbReference type="InterPro" id="IPR000218">
    <property type="entry name" value="Ribosomal_uL14"/>
</dbReference>
<dbReference type="InterPro" id="IPR005745">
    <property type="entry name" value="Ribosomal_uL14_bac-type"/>
</dbReference>
<dbReference type="InterPro" id="IPR019972">
    <property type="entry name" value="Ribosomal_uL14_CS"/>
</dbReference>
<dbReference type="InterPro" id="IPR036853">
    <property type="entry name" value="Ribosomal_uL14_sf"/>
</dbReference>
<dbReference type="NCBIfam" id="TIGR01067">
    <property type="entry name" value="rplN_bact"/>
    <property type="match status" value="1"/>
</dbReference>
<dbReference type="PANTHER" id="PTHR11761">
    <property type="entry name" value="50S/60S RIBOSOMAL PROTEIN L14/L23"/>
    <property type="match status" value="1"/>
</dbReference>
<dbReference type="PANTHER" id="PTHR11761:SF3">
    <property type="entry name" value="LARGE RIBOSOMAL SUBUNIT PROTEIN UL14M"/>
    <property type="match status" value="1"/>
</dbReference>
<dbReference type="Pfam" id="PF00238">
    <property type="entry name" value="Ribosomal_L14"/>
    <property type="match status" value="1"/>
</dbReference>
<dbReference type="SMART" id="SM01374">
    <property type="entry name" value="Ribosomal_L14"/>
    <property type="match status" value="1"/>
</dbReference>
<dbReference type="SUPFAM" id="SSF50193">
    <property type="entry name" value="Ribosomal protein L14"/>
    <property type="match status" value="1"/>
</dbReference>
<dbReference type="PROSITE" id="PS00049">
    <property type="entry name" value="RIBOSOMAL_L14"/>
    <property type="match status" value="1"/>
</dbReference>
<name>RL14_CLOD6</name>
<keyword id="KW-1185">Reference proteome</keyword>
<keyword id="KW-0687">Ribonucleoprotein</keyword>
<keyword id="KW-0689">Ribosomal protein</keyword>
<keyword id="KW-0694">RNA-binding</keyword>
<keyword id="KW-0699">rRNA-binding</keyword>
<gene>
    <name evidence="1" type="primary">rplN</name>
    <name type="ordered locus">CD630_00820</name>
</gene>
<comment type="function">
    <text evidence="1">Binds to 23S rRNA. Forms part of two intersubunit bridges in the 70S ribosome.</text>
</comment>
<comment type="subunit">
    <text evidence="1">Part of the 50S ribosomal subunit. Forms a cluster with proteins L3 and L19. In the 70S ribosome, L14 and L19 interact and together make contacts with the 16S rRNA in bridges B5 and B8.</text>
</comment>
<comment type="similarity">
    <text evidence="1">Belongs to the universal ribosomal protein uL14 family.</text>
</comment>
<feature type="chain" id="PRO_1000055561" description="Large ribosomal subunit protein uL14">
    <location>
        <begin position="1"/>
        <end position="122"/>
    </location>
</feature>